<reference key="1">
    <citation type="journal article" date="2009" name="Genome Biol.">
        <title>Genomic and genetic analyses of diversity and plant interactions of Pseudomonas fluorescens.</title>
        <authorList>
            <person name="Silby M.W."/>
            <person name="Cerdeno-Tarraga A.M."/>
            <person name="Vernikos G.S."/>
            <person name="Giddens S.R."/>
            <person name="Jackson R.W."/>
            <person name="Preston G.M."/>
            <person name="Zhang X.-X."/>
            <person name="Moon C.D."/>
            <person name="Gehrig S.M."/>
            <person name="Godfrey S.A.C."/>
            <person name="Knight C.G."/>
            <person name="Malone J.G."/>
            <person name="Robinson Z."/>
            <person name="Spiers A.J."/>
            <person name="Harris S."/>
            <person name="Challis G.L."/>
            <person name="Yaxley A.M."/>
            <person name="Harris D."/>
            <person name="Seeger K."/>
            <person name="Murphy L."/>
            <person name="Rutter S."/>
            <person name="Squares R."/>
            <person name="Quail M.A."/>
            <person name="Saunders E."/>
            <person name="Mavromatis K."/>
            <person name="Brettin T.S."/>
            <person name="Bentley S.D."/>
            <person name="Hothersall J."/>
            <person name="Stephens E."/>
            <person name="Thomas C.M."/>
            <person name="Parkhill J."/>
            <person name="Levy S.B."/>
            <person name="Rainey P.B."/>
            <person name="Thomson N.R."/>
        </authorList>
    </citation>
    <scope>NUCLEOTIDE SEQUENCE [LARGE SCALE GENOMIC DNA]</scope>
    <source>
        <strain>Pf0-1</strain>
    </source>
</reference>
<organism>
    <name type="scientific">Pseudomonas fluorescens (strain Pf0-1)</name>
    <dbReference type="NCBI Taxonomy" id="205922"/>
    <lineage>
        <taxon>Bacteria</taxon>
        <taxon>Pseudomonadati</taxon>
        <taxon>Pseudomonadota</taxon>
        <taxon>Gammaproteobacteria</taxon>
        <taxon>Pseudomonadales</taxon>
        <taxon>Pseudomonadaceae</taxon>
        <taxon>Pseudomonas</taxon>
    </lineage>
</organism>
<keyword id="KW-0066">ATP synthesis</keyword>
<keyword id="KW-0997">Cell inner membrane</keyword>
<keyword id="KW-1003">Cell membrane</keyword>
<keyword id="KW-0138">CF(0)</keyword>
<keyword id="KW-0375">Hydrogen ion transport</keyword>
<keyword id="KW-0406">Ion transport</keyword>
<keyword id="KW-0446">Lipid-binding</keyword>
<keyword id="KW-0472">Membrane</keyword>
<keyword id="KW-0812">Transmembrane</keyword>
<keyword id="KW-1133">Transmembrane helix</keyword>
<keyword id="KW-0813">Transport</keyword>
<dbReference type="EMBL" id="CP000094">
    <property type="protein sequence ID" value="ABA77468.1"/>
    <property type="molecule type" value="Genomic_DNA"/>
</dbReference>
<dbReference type="RefSeq" id="WP_003097235.1">
    <property type="nucleotide sequence ID" value="NC_007492.2"/>
</dbReference>
<dbReference type="SMR" id="Q3K436"/>
<dbReference type="GeneID" id="98280758"/>
<dbReference type="KEGG" id="pfo:Pfl01_5735"/>
<dbReference type="eggNOG" id="ENOG5032S3K">
    <property type="taxonomic scope" value="Bacteria"/>
</dbReference>
<dbReference type="HOGENOM" id="CLU_148047_1_0_6"/>
<dbReference type="Proteomes" id="UP000002704">
    <property type="component" value="Chromosome"/>
</dbReference>
<dbReference type="GO" id="GO:0005886">
    <property type="term" value="C:plasma membrane"/>
    <property type="evidence" value="ECO:0007669"/>
    <property type="project" value="UniProtKB-SubCell"/>
</dbReference>
<dbReference type="GO" id="GO:0045259">
    <property type="term" value="C:proton-transporting ATP synthase complex"/>
    <property type="evidence" value="ECO:0007669"/>
    <property type="project" value="UniProtKB-KW"/>
</dbReference>
<dbReference type="GO" id="GO:0033177">
    <property type="term" value="C:proton-transporting two-sector ATPase complex, proton-transporting domain"/>
    <property type="evidence" value="ECO:0007669"/>
    <property type="project" value="InterPro"/>
</dbReference>
<dbReference type="GO" id="GO:0008289">
    <property type="term" value="F:lipid binding"/>
    <property type="evidence" value="ECO:0007669"/>
    <property type="project" value="UniProtKB-KW"/>
</dbReference>
<dbReference type="GO" id="GO:0046933">
    <property type="term" value="F:proton-transporting ATP synthase activity, rotational mechanism"/>
    <property type="evidence" value="ECO:0007669"/>
    <property type="project" value="UniProtKB-UniRule"/>
</dbReference>
<dbReference type="CDD" id="cd18185">
    <property type="entry name" value="ATP-synt_Fo_c_ATPE"/>
    <property type="match status" value="1"/>
</dbReference>
<dbReference type="FunFam" id="1.20.20.10:FF:000002">
    <property type="entry name" value="ATP synthase subunit c"/>
    <property type="match status" value="1"/>
</dbReference>
<dbReference type="Gene3D" id="1.20.20.10">
    <property type="entry name" value="F1F0 ATP synthase subunit C"/>
    <property type="match status" value="1"/>
</dbReference>
<dbReference type="HAMAP" id="MF_01396">
    <property type="entry name" value="ATP_synth_c_bact"/>
    <property type="match status" value="1"/>
</dbReference>
<dbReference type="InterPro" id="IPR005953">
    <property type="entry name" value="ATP_synth_csu_bac/chlpt"/>
</dbReference>
<dbReference type="InterPro" id="IPR000454">
    <property type="entry name" value="ATP_synth_F0_csu"/>
</dbReference>
<dbReference type="InterPro" id="IPR020537">
    <property type="entry name" value="ATP_synth_F0_csu_DDCD_BS"/>
</dbReference>
<dbReference type="InterPro" id="IPR038662">
    <property type="entry name" value="ATP_synth_F0_csu_sf"/>
</dbReference>
<dbReference type="InterPro" id="IPR002379">
    <property type="entry name" value="ATPase_proteolipid_c-like_dom"/>
</dbReference>
<dbReference type="InterPro" id="IPR035921">
    <property type="entry name" value="F/V-ATP_Csub_sf"/>
</dbReference>
<dbReference type="NCBIfam" id="TIGR01260">
    <property type="entry name" value="ATP_synt_c"/>
    <property type="match status" value="1"/>
</dbReference>
<dbReference type="NCBIfam" id="NF005363">
    <property type="entry name" value="PRK06876.1"/>
    <property type="match status" value="1"/>
</dbReference>
<dbReference type="Pfam" id="PF00137">
    <property type="entry name" value="ATP-synt_C"/>
    <property type="match status" value="1"/>
</dbReference>
<dbReference type="PRINTS" id="PR00124">
    <property type="entry name" value="ATPASEC"/>
</dbReference>
<dbReference type="SUPFAM" id="SSF81333">
    <property type="entry name" value="F1F0 ATP synthase subunit C"/>
    <property type="match status" value="1"/>
</dbReference>
<dbReference type="PROSITE" id="PS00605">
    <property type="entry name" value="ATPASE_C"/>
    <property type="match status" value="1"/>
</dbReference>
<proteinExistence type="inferred from homology"/>
<accession>Q3K436</accession>
<comment type="function">
    <text evidence="1">F(1)F(0) ATP synthase produces ATP from ADP in the presence of a proton or sodium gradient. F-type ATPases consist of two structural domains, F(1) containing the extramembraneous catalytic core and F(0) containing the membrane proton channel, linked together by a central stalk and a peripheral stalk. During catalysis, ATP synthesis in the catalytic domain of F(1) is coupled via a rotary mechanism of the central stalk subunits to proton translocation.</text>
</comment>
<comment type="function">
    <text evidence="1">Key component of the F(0) channel; it plays a direct role in translocation across the membrane. A homomeric c-ring of between 10-14 subunits forms the central stalk rotor element with the F(1) delta and epsilon subunits.</text>
</comment>
<comment type="subunit">
    <text evidence="1">F-type ATPases have 2 components, F(1) - the catalytic core - and F(0) - the membrane proton channel. F(1) has five subunits: alpha(3), beta(3), gamma(1), delta(1), epsilon(1). F(0) has three main subunits: a(1), b(2) and c(10-14). The alpha and beta chains form an alternating ring which encloses part of the gamma chain. F(1) is attached to F(0) by a central stalk formed by the gamma and epsilon chains, while a peripheral stalk is formed by the delta and b chains.</text>
</comment>
<comment type="subcellular location">
    <subcellularLocation>
        <location evidence="1">Cell inner membrane</location>
        <topology evidence="1">Multi-pass membrane protein</topology>
    </subcellularLocation>
</comment>
<comment type="similarity">
    <text evidence="1">Belongs to the ATPase C chain family.</text>
</comment>
<protein>
    <recommendedName>
        <fullName evidence="1">ATP synthase subunit c</fullName>
    </recommendedName>
    <alternativeName>
        <fullName evidence="1">ATP synthase F(0) sector subunit c</fullName>
    </alternativeName>
    <alternativeName>
        <fullName evidence="1">F-type ATPase subunit c</fullName>
        <shortName evidence="1">F-ATPase subunit c</shortName>
    </alternativeName>
    <alternativeName>
        <fullName evidence="1">Lipid-binding protein</fullName>
    </alternativeName>
</protein>
<name>ATPL_PSEPF</name>
<sequence length="85" mass="8608">METVVGLTAIAVALLIGLGALGTAIGFGLLGGKFLEGAARQPEMVPMLQVKMFIVAGLLDAVTMIGVGIALFFTFANPFVGQIAG</sequence>
<feature type="chain" id="PRO_1000215165" description="ATP synthase subunit c">
    <location>
        <begin position="1"/>
        <end position="85"/>
    </location>
</feature>
<feature type="transmembrane region" description="Helical" evidence="1">
    <location>
        <begin position="10"/>
        <end position="30"/>
    </location>
</feature>
<feature type="transmembrane region" description="Helical" evidence="1">
    <location>
        <begin position="53"/>
        <end position="73"/>
    </location>
</feature>
<feature type="site" description="Reversibly protonated during proton transport" evidence="1">
    <location>
        <position position="60"/>
    </location>
</feature>
<evidence type="ECO:0000255" key="1">
    <source>
        <dbReference type="HAMAP-Rule" id="MF_01396"/>
    </source>
</evidence>
<gene>
    <name evidence="1" type="primary">atpE</name>
    <name type="ordered locus">Pfl01_5735</name>
</gene>